<gene>
    <name type="primary">cbbYP</name>
    <name type="synonym">cfxYP</name>
    <name type="ordered locus">PHG424</name>
</gene>
<organism>
    <name type="scientific">Cupriavidus necator (strain ATCC 17699 / DSM 428 / KCTC 22496 / NCIMB 10442 / H16 / Stanier 337)</name>
    <name type="common">Ralstonia eutropha</name>
    <dbReference type="NCBI Taxonomy" id="381666"/>
    <lineage>
        <taxon>Bacteria</taxon>
        <taxon>Pseudomonadati</taxon>
        <taxon>Pseudomonadota</taxon>
        <taxon>Betaproteobacteria</taxon>
        <taxon>Burkholderiales</taxon>
        <taxon>Burkholderiaceae</taxon>
        <taxon>Cupriavidus</taxon>
    </lineage>
</organism>
<evidence type="ECO:0000305" key="1"/>
<accession>Q04541</accession>
<protein>
    <recommendedName>
        <fullName>Protein CbbY, plasmid</fullName>
    </recommendedName>
</protein>
<reference key="1">
    <citation type="journal article" date="1992" name="J. Bacteriol.">
        <title>The Calvin cycle enzyme pentose-5-phosphate 3-epimerase is encoded within the cfx operons of the chemoautotroph Alcaligenes eutrophus.</title>
        <authorList>
            <person name="Kusian B."/>
            <person name="Yoo J.-G."/>
            <person name="Bednarski R."/>
            <person name="Bowien B."/>
        </authorList>
    </citation>
    <scope>NUCLEOTIDE SEQUENCE [GENOMIC DNA]</scope>
</reference>
<reference key="2">
    <citation type="journal article" date="2003" name="J. Mol. Biol.">
        <title>Complete nucleotide sequence of pHG1: a Ralstonia eutropha H16 megaplasmid encoding key enzymes of H(2)-based lithoautotrophy and anaerobiosis.</title>
        <authorList>
            <person name="Schwartz E."/>
            <person name="Henne A."/>
            <person name="Cramm R."/>
            <person name="Eitinger T."/>
            <person name="Friedrich B."/>
            <person name="Gottschalk G."/>
        </authorList>
    </citation>
    <scope>NUCLEOTIDE SEQUENCE [LARGE SCALE GENOMIC DNA]</scope>
    <source>
        <strain>ATCC 17699 / DSM 428 / KCTC 22496 / NCIMB 10442 / H16 / Stanier 337</strain>
    </source>
</reference>
<sequence>MQALIFDVDGTLADTETAHLQAFNAAFAEVGLDWHWDAPLYTRLLKVAGGKERLMHYWRMVDPEEARGCKVKETIDAVHAIKTRHYAERVGAGGLPLRPGIARLIAEAGEAGLPLAIATTTTPANLDALLQAHLGADWRGRFAAICDAGTTAIKKPAPDVYLAVLERLGLEAGDCLAIEDSGNGLRAARAAGIPTVVTPTTFSAQDSFEGALLVLPHLGDPAEPMPQHVPGAAHRWADLAALRAWHHGTLIEAT</sequence>
<comment type="similarity">
    <text evidence="1">Belongs to the HAD-like hydrolase superfamily. CbbY/CbbZ/Gph/YieH family.</text>
</comment>
<dbReference type="EMBL" id="M64172">
    <property type="protein sequence ID" value="AAA98230.1"/>
    <property type="molecule type" value="Genomic_DNA"/>
</dbReference>
<dbReference type="EMBL" id="AY305378">
    <property type="protein sequence ID" value="AAP86173.1"/>
    <property type="molecule type" value="Genomic_DNA"/>
</dbReference>
<dbReference type="PIR" id="E47019">
    <property type="entry name" value="E47019"/>
</dbReference>
<dbReference type="RefSeq" id="WP_011154336.1">
    <property type="nucleotide sequence ID" value="NC_005241.1"/>
</dbReference>
<dbReference type="SMR" id="Q04541"/>
<dbReference type="KEGG" id="reh:PHG424"/>
<dbReference type="PATRIC" id="fig|381666.6.peg.352"/>
<dbReference type="eggNOG" id="COG0637">
    <property type="taxonomic scope" value="Bacteria"/>
</dbReference>
<dbReference type="HOGENOM" id="CLU_045011_0_2_4"/>
<dbReference type="OrthoDB" id="5293434at2"/>
<dbReference type="Proteomes" id="UP000008210">
    <property type="component" value="Plasmid megaplasmid pHG1"/>
</dbReference>
<dbReference type="GO" id="GO:0016787">
    <property type="term" value="F:hydrolase activity"/>
    <property type="evidence" value="ECO:0007669"/>
    <property type="project" value="InterPro"/>
</dbReference>
<dbReference type="CDD" id="cd07528">
    <property type="entry name" value="HAD_CbbY-like"/>
    <property type="match status" value="1"/>
</dbReference>
<dbReference type="Gene3D" id="3.40.50.1000">
    <property type="entry name" value="HAD superfamily/HAD-like"/>
    <property type="match status" value="1"/>
</dbReference>
<dbReference type="Gene3D" id="1.10.150.240">
    <property type="entry name" value="Putative phosphatase, domain 2"/>
    <property type="match status" value="1"/>
</dbReference>
<dbReference type="InterPro" id="IPR044999">
    <property type="entry name" value="CbbY-like"/>
</dbReference>
<dbReference type="InterPro" id="IPR036412">
    <property type="entry name" value="HAD-like_sf"/>
</dbReference>
<dbReference type="InterPro" id="IPR006439">
    <property type="entry name" value="HAD-SF_hydro_IA"/>
</dbReference>
<dbReference type="InterPro" id="IPR023214">
    <property type="entry name" value="HAD_sf"/>
</dbReference>
<dbReference type="InterPro" id="IPR023198">
    <property type="entry name" value="PGP-like_dom2"/>
</dbReference>
<dbReference type="NCBIfam" id="TIGR01509">
    <property type="entry name" value="HAD-SF-IA-v3"/>
    <property type="match status" value="1"/>
</dbReference>
<dbReference type="PANTHER" id="PTHR42896:SF2">
    <property type="entry name" value="CBBY-LIKE PROTEIN"/>
    <property type="match status" value="1"/>
</dbReference>
<dbReference type="PANTHER" id="PTHR42896">
    <property type="entry name" value="XYLULOSE-1,5-BISPHOSPHATE (XUBP) PHOSPHATASE"/>
    <property type="match status" value="1"/>
</dbReference>
<dbReference type="Pfam" id="PF00702">
    <property type="entry name" value="Hydrolase"/>
    <property type="match status" value="1"/>
</dbReference>
<dbReference type="PRINTS" id="PR00413">
    <property type="entry name" value="HADHALOGNASE"/>
</dbReference>
<dbReference type="SFLD" id="SFLDG01135">
    <property type="entry name" value="C1.5.6:_HAD__Beta-PGM__Phospha"/>
    <property type="match status" value="1"/>
</dbReference>
<dbReference type="SFLD" id="SFLDF00035">
    <property type="entry name" value="phosphoglycolate_phosphatase"/>
    <property type="match status" value="1"/>
</dbReference>
<dbReference type="SUPFAM" id="SSF56784">
    <property type="entry name" value="HAD-like"/>
    <property type="match status" value="1"/>
</dbReference>
<geneLocation type="plasmid">
    <name>megaplasmid pHG1</name>
</geneLocation>
<feature type="chain" id="PRO_0000108055" description="Protein CbbY, plasmid">
    <location>
        <begin position="1"/>
        <end position="254"/>
    </location>
</feature>
<name>CBBYP_CUPNH</name>
<proteinExistence type="inferred from homology"/>
<keyword id="KW-0614">Plasmid</keyword>
<keyword id="KW-1185">Reference proteome</keyword>